<gene>
    <name evidence="2" type="primary">KRT7</name>
</gene>
<proteinExistence type="evidence at transcript level"/>
<sequence length="483" mass="53286">MSVQFSSQTFSSRSAAFPRRGGQGRLSSVSSRAGSVSQMGGFGSSSLYGLGSGRPRVSVGFRSAYGGSSGGGFGARGAGLQEVTINQSLLAPLNLEIDPQIQQVRKEEREQIKTLNNKFASFIDKVRFLEQQNQMLETKWRLLQEQKSSKGSSLPAIFEAHIANLRRQLDGLQGDRGRLEGELKNMQDVVEDFKNKYEGEINKRTAAENEFVVLKKDVDNAYMNKVELEAKVDGLTDEINFLRTLYEMELNELQTQISDTSVVLSMDNSRSLDLDSIISEVKAQYEDIANRSRAEAEYQYQIKFETLQAQAGKHGEDLRSTRNEISEMNRAIQRLQAEIDNVKNQRTKLEASIAEAEERGELALKDARAKQEELEAALQRSKQERARQVREYQDLLNVKLALDIEIATYRKLLEGEESRLSGDGVGAVNISVVNSVGGSLGGGVSLGGTMGGNALGFSSGTGSTIFKTYSTRTTSSSRRSVRN</sequence>
<reference evidence="8" key="1">
    <citation type="journal article" date="2002" name="Biochem. Biophys. Res. Commun.">
        <title>Cloning of human, murine, and marsupial keratin 7 and a survey of K7 expression in the mouse.</title>
        <authorList>
            <person name="Smith F.J.D."/>
            <person name="Porter R.M."/>
            <person name="Corden L.D."/>
            <person name="Lunny D.P."/>
            <person name="Lane E.B."/>
            <person name="McLean W.H.I."/>
        </authorList>
    </citation>
    <scope>NUCLEOTIDE SEQUENCE [MRNA]</scope>
    <source>
        <tissue evidence="6">Kidney epithelium</tissue>
    </source>
</reference>
<accession>Q8HZR5</accession>
<keyword id="KW-0007">Acetylation</keyword>
<keyword id="KW-0175">Coiled coil</keyword>
<keyword id="KW-0325">Glycoprotein</keyword>
<keyword id="KW-0403">Intermediate filament</keyword>
<keyword id="KW-1017">Isopeptide bond</keyword>
<keyword id="KW-0416">Keratin</keyword>
<keyword id="KW-0488">Methylation</keyword>
<keyword id="KW-0597">Phosphoprotein</keyword>
<keyword id="KW-0832">Ubl conjugation</keyword>
<name>K2C7_POTTR</name>
<feature type="initiator methionine" description="Removed" evidence="2">
    <location>
        <position position="1"/>
    </location>
</feature>
<feature type="chain" id="PRO_0000307637" description="Keratin, type II cytoskeletal 7">
    <location>
        <begin position="2"/>
        <end position="483"/>
    </location>
</feature>
<feature type="domain" description="IF rod" evidence="4">
    <location>
        <begin position="108"/>
        <end position="420"/>
    </location>
</feature>
<feature type="region of interest" description="Head" evidence="3">
    <location>
        <begin position="2"/>
        <end position="107"/>
    </location>
</feature>
<feature type="region of interest" description="Disordered" evidence="5">
    <location>
        <begin position="14"/>
        <end position="37"/>
    </location>
</feature>
<feature type="region of interest" description="Coil 1A" evidence="3">
    <location>
        <begin position="107"/>
        <end position="143"/>
    </location>
</feature>
<feature type="region of interest" description="Linker 1" evidence="3">
    <location>
        <begin position="144"/>
        <end position="161"/>
    </location>
</feature>
<feature type="region of interest" description="Coil 1B" evidence="3">
    <location>
        <begin position="162"/>
        <end position="253"/>
    </location>
</feature>
<feature type="region of interest" description="Linker 12" evidence="3">
    <location>
        <begin position="254"/>
        <end position="277"/>
    </location>
</feature>
<feature type="region of interest" description="Coil 2" evidence="3">
    <location>
        <begin position="278"/>
        <end position="416"/>
    </location>
</feature>
<feature type="region of interest" description="Tail" evidence="3">
    <location>
        <begin position="417"/>
        <end position="483"/>
    </location>
</feature>
<feature type="compositionally biased region" description="Low complexity" evidence="5">
    <location>
        <begin position="25"/>
        <end position="37"/>
    </location>
</feature>
<feature type="site" description="Stutter" evidence="3">
    <location>
        <position position="360"/>
    </location>
</feature>
<feature type="modified residue" description="N-acetylserine" evidence="2">
    <location>
        <position position="2"/>
    </location>
</feature>
<feature type="modified residue" description="Phosphoserine" evidence="2">
    <location>
        <position position="2"/>
    </location>
</feature>
<feature type="modified residue" description="Phosphoserine" evidence="2">
    <location>
        <position position="6"/>
    </location>
</feature>
<feature type="modified residue" description="Phosphoserine" evidence="2">
    <location>
        <position position="7"/>
    </location>
</feature>
<feature type="modified residue" description="Dimethylated arginine; alternate" evidence="2">
    <location>
        <position position="20"/>
    </location>
</feature>
<feature type="modified residue" description="Omega-N-methylarginine; alternate" evidence="2">
    <location>
        <position position="20"/>
    </location>
</feature>
<feature type="modified residue" description="Phosphoserine" evidence="2">
    <location>
        <position position="63"/>
    </location>
</feature>
<feature type="modified residue" description="Phosphoserine" evidence="2">
    <location>
        <position position="88"/>
    </location>
</feature>
<feature type="modified residue" description="Phosphothreonine" evidence="2">
    <location>
        <position position="114"/>
    </location>
</feature>
<feature type="modified residue" description="N6-acetyllysine" evidence="2">
    <location>
        <position position="196"/>
    </location>
</feature>
<feature type="modified residue" description="Phosphoserine" evidence="2">
    <location>
        <position position="269"/>
    </location>
</feature>
<feature type="modified residue" description="Phosphoserine" evidence="2">
    <location>
        <position position="271"/>
    </location>
</feature>
<feature type="modified residue" description="Phosphothreonine" evidence="2">
    <location>
        <position position="306"/>
    </location>
</feature>
<feature type="glycosylation site" description="O-linked (GlcNAc) serine" evidence="2">
    <location>
        <position position="12"/>
    </location>
</feature>
<feature type="cross-link" description="Glycyl lysine isopeptide (Lys-Gly) (interchain with G-Cter in SUMO2)" evidence="2">
    <location>
        <position position="147"/>
    </location>
</feature>
<feature type="cross-link" description="Glycyl lysine isopeptide (Lys-Gly) (interchain with G-Cter in SUMO2)" evidence="2">
    <location>
        <position position="282"/>
    </location>
</feature>
<feature type="cross-link" description="Glycyl lysine isopeptide (Lys-Gly) (interchain with G-Cter in SUMO2)" evidence="2">
    <location>
        <position position="303"/>
    </location>
</feature>
<feature type="cross-link" description="Glycyl lysine isopeptide (Lys-Gly) (interchain with G-Cter in SUMO2)" evidence="2">
    <location>
        <position position="313"/>
    </location>
</feature>
<feature type="cross-link" description="Glycyl lysine isopeptide (Lys-Gly) (interchain with G-Cter in SUMO2)" evidence="2">
    <location>
        <position position="348"/>
    </location>
</feature>
<dbReference type="EMBL" id="AF509889">
    <property type="protein sequence ID" value="AAN64033.1"/>
    <property type="molecule type" value="mRNA"/>
</dbReference>
<dbReference type="SMR" id="Q8HZR5"/>
<dbReference type="GO" id="GO:0005615">
    <property type="term" value="C:extracellular space"/>
    <property type="evidence" value="ECO:0007669"/>
    <property type="project" value="TreeGrafter"/>
</dbReference>
<dbReference type="GO" id="GO:0045095">
    <property type="term" value="C:keratin filament"/>
    <property type="evidence" value="ECO:0007669"/>
    <property type="project" value="InterPro"/>
</dbReference>
<dbReference type="GO" id="GO:0030280">
    <property type="term" value="F:structural constituent of skin epidermis"/>
    <property type="evidence" value="ECO:0007669"/>
    <property type="project" value="TreeGrafter"/>
</dbReference>
<dbReference type="GO" id="GO:0045109">
    <property type="term" value="P:intermediate filament organization"/>
    <property type="evidence" value="ECO:0007669"/>
    <property type="project" value="TreeGrafter"/>
</dbReference>
<dbReference type="GO" id="GO:0031424">
    <property type="term" value="P:keratinization"/>
    <property type="evidence" value="ECO:0007669"/>
    <property type="project" value="TreeGrafter"/>
</dbReference>
<dbReference type="FunFam" id="1.20.5.1160:FF:000001">
    <property type="entry name" value="Keratin type II"/>
    <property type="match status" value="1"/>
</dbReference>
<dbReference type="FunFam" id="1.20.5.170:FF:000004">
    <property type="entry name" value="Keratin, type II cytoskeletal 5"/>
    <property type="match status" value="1"/>
</dbReference>
<dbReference type="FunFam" id="1.20.5.500:FF:000001">
    <property type="entry name" value="Type II keratin 23"/>
    <property type="match status" value="1"/>
</dbReference>
<dbReference type="Gene3D" id="1.20.5.170">
    <property type="match status" value="1"/>
</dbReference>
<dbReference type="Gene3D" id="1.20.5.500">
    <property type="entry name" value="Single helix bin"/>
    <property type="match status" value="1"/>
</dbReference>
<dbReference type="Gene3D" id="1.20.5.1160">
    <property type="entry name" value="Vasodilator-stimulated phosphoprotein"/>
    <property type="match status" value="1"/>
</dbReference>
<dbReference type="InterPro" id="IPR018039">
    <property type="entry name" value="IF_conserved"/>
</dbReference>
<dbReference type="InterPro" id="IPR039008">
    <property type="entry name" value="IF_rod_dom"/>
</dbReference>
<dbReference type="InterPro" id="IPR032444">
    <property type="entry name" value="Keratin_2_head"/>
</dbReference>
<dbReference type="InterPro" id="IPR003054">
    <property type="entry name" value="Keratin_II"/>
</dbReference>
<dbReference type="PANTHER" id="PTHR45616">
    <property type="entry name" value="GATA-TYPE DOMAIN-CONTAINING PROTEIN"/>
    <property type="match status" value="1"/>
</dbReference>
<dbReference type="PANTHER" id="PTHR45616:SF21">
    <property type="entry name" value="KERATIN, TYPE II CYTOSKELETAL 7"/>
    <property type="match status" value="1"/>
</dbReference>
<dbReference type="Pfam" id="PF00038">
    <property type="entry name" value="Filament"/>
    <property type="match status" value="1"/>
</dbReference>
<dbReference type="Pfam" id="PF16208">
    <property type="entry name" value="Keratin_2_head"/>
    <property type="match status" value="1"/>
</dbReference>
<dbReference type="PRINTS" id="PR01276">
    <property type="entry name" value="TYPE2KERATIN"/>
</dbReference>
<dbReference type="SMART" id="SM01391">
    <property type="entry name" value="Filament"/>
    <property type="match status" value="1"/>
</dbReference>
<dbReference type="SUPFAM" id="SSF64593">
    <property type="entry name" value="Intermediate filament protein, coiled coil region"/>
    <property type="match status" value="3"/>
</dbReference>
<dbReference type="PROSITE" id="PS00226">
    <property type="entry name" value="IF_ROD_1"/>
    <property type="match status" value="1"/>
</dbReference>
<dbReference type="PROSITE" id="PS51842">
    <property type="entry name" value="IF_ROD_2"/>
    <property type="match status" value="1"/>
</dbReference>
<organism>
    <name type="scientific">Potorous tridactylus</name>
    <name type="common">Potoroo</name>
    <dbReference type="NCBI Taxonomy" id="9310"/>
    <lineage>
        <taxon>Eukaryota</taxon>
        <taxon>Metazoa</taxon>
        <taxon>Chordata</taxon>
        <taxon>Craniata</taxon>
        <taxon>Vertebrata</taxon>
        <taxon>Euteleostomi</taxon>
        <taxon>Mammalia</taxon>
        <taxon>Metatheria</taxon>
        <taxon>Diprotodontia</taxon>
        <taxon>Potoroidae</taxon>
        <taxon>Potorous</taxon>
    </lineage>
</organism>
<protein>
    <recommendedName>
        <fullName>Keratin, type II cytoskeletal 7</fullName>
    </recommendedName>
    <alternativeName>
        <fullName>Cytokeratin-7</fullName>
        <shortName>CK-7</shortName>
    </alternativeName>
    <alternativeName>
        <fullName>Keratin-7</fullName>
        <shortName>K7</shortName>
    </alternativeName>
    <alternativeName>
        <fullName>Type-II keratin Kb7</fullName>
    </alternativeName>
</protein>
<comment type="function">
    <text evidence="1">Blocks interferon-dependent interphase and stimulates DNA synthesis in cells.</text>
</comment>
<comment type="subunit">
    <text evidence="1">Heterotetramer of two type I and two type II keratins. Interacts with eukaryotic translation initiator factor 3 (eIF3) subunit EIF3S10. Interacts with GPER1 (By similarity).</text>
</comment>
<comment type="PTM">
    <text evidence="2">Arg-20 is dimethylated, probably to asymmetric dimethylarginine.</text>
</comment>
<comment type="miscellaneous">
    <text evidence="7">There are two types of cytoskeletal and microfibrillar keratin: I (acidic; 40-55 kDa) and II (neutral to basic; 56-70 kDa).</text>
</comment>
<comment type="similarity">
    <text evidence="4">Belongs to the intermediate filament family.</text>
</comment>
<evidence type="ECO:0000250" key="1"/>
<evidence type="ECO:0000250" key="2">
    <source>
        <dbReference type="UniProtKB" id="P08729"/>
    </source>
</evidence>
<evidence type="ECO:0000255" key="3"/>
<evidence type="ECO:0000255" key="4">
    <source>
        <dbReference type="PROSITE-ProRule" id="PRU01188"/>
    </source>
</evidence>
<evidence type="ECO:0000256" key="5">
    <source>
        <dbReference type="SAM" id="MobiDB-lite"/>
    </source>
</evidence>
<evidence type="ECO:0000269" key="6">
    <source>
    </source>
</evidence>
<evidence type="ECO:0000305" key="7"/>
<evidence type="ECO:0000312" key="8">
    <source>
        <dbReference type="EMBL" id="AAN64033.1"/>
    </source>
</evidence>